<comment type="similarity">
    <text evidence="1">Belongs to the bacterial ribosomal protein bL28 family.</text>
</comment>
<sequence length="97" mass="10997">MSRACELTGKTVQYGNNVSHANNKTRRRFLPNLCNVTLISEVLQQSYRLRVSASALRSVEHRGGLDSFLVRADDKELSQRARLLKRQIVKKKAEQAA</sequence>
<accession>Q6FYG6</accession>
<evidence type="ECO:0000255" key="1">
    <source>
        <dbReference type="HAMAP-Rule" id="MF_00373"/>
    </source>
</evidence>
<evidence type="ECO:0000305" key="2"/>
<proteinExistence type="inferred from homology"/>
<protein>
    <recommendedName>
        <fullName evidence="1">Large ribosomal subunit protein bL28</fullName>
    </recommendedName>
    <alternativeName>
        <fullName evidence="2">50S ribosomal protein L28</fullName>
    </alternativeName>
</protein>
<gene>
    <name evidence="1" type="primary">rpmB</name>
    <name type="ordered locus">BQ12830</name>
</gene>
<feature type="chain" id="PRO_0000178434" description="Large ribosomal subunit protein bL28">
    <location>
        <begin position="1"/>
        <end position="97"/>
    </location>
</feature>
<reference key="1">
    <citation type="journal article" date="2004" name="Proc. Natl. Acad. Sci. U.S.A.">
        <title>The louse-borne human pathogen Bartonella quintana is a genomic derivative of the zoonotic agent Bartonella henselae.</title>
        <authorList>
            <person name="Alsmark U.C.M."/>
            <person name="Frank A.C."/>
            <person name="Karlberg E.O."/>
            <person name="Legault B.-A."/>
            <person name="Ardell D.H."/>
            <person name="Canbaeck B."/>
            <person name="Eriksson A.-S."/>
            <person name="Naeslund A.K."/>
            <person name="Handley S.A."/>
            <person name="Huvet M."/>
            <person name="La Scola B."/>
            <person name="Holmberg M."/>
            <person name="Andersson S.G.E."/>
        </authorList>
    </citation>
    <scope>NUCLEOTIDE SEQUENCE [LARGE SCALE GENOMIC DNA]</scope>
    <source>
        <strain>Toulouse</strain>
    </source>
</reference>
<keyword id="KW-0687">Ribonucleoprotein</keyword>
<keyword id="KW-0689">Ribosomal protein</keyword>
<organism>
    <name type="scientific">Bartonella quintana (strain Toulouse)</name>
    <name type="common">Rochalimaea quintana</name>
    <dbReference type="NCBI Taxonomy" id="283165"/>
    <lineage>
        <taxon>Bacteria</taxon>
        <taxon>Pseudomonadati</taxon>
        <taxon>Pseudomonadota</taxon>
        <taxon>Alphaproteobacteria</taxon>
        <taxon>Hyphomicrobiales</taxon>
        <taxon>Bartonellaceae</taxon>
        <taxon>Bartonella</taxon>
    </lineage>
</organism>
<dbReference type="EMBL" id="BX897700">
    <property type="protein sequence ID" value="CAF26742.1"/>
    <property type="molecule type" value="Genomic_DNA"/>
</dbReference>
<dbReference type="RefSeq" id="WP_011179907.1">
    <property type="nucleotide sequence ID" value="NC_005955.1"/>
</dbReference>
<dbReference type="SMR" id="Q6FYG6"/>
<dbReference type="GeneID" id="56533612"/>
<dbReference type="KEGG" id="bqu:BQ12830"/>
<dbReference type="eggNOG" id="COG0227">
    <property type="taxonomic scope" value="Bacteria"/>
</dbReference>
<dbReference type="HOGENOM" id="CLU_064548_4_2_5"/>
<dbReference type="OrthoDB" id="9805609at2"/>
<dbReference type="Proteomes" id="UP000000597">
    <property type="component" value="Chromosome"/>
</dbReference>
<dbReference type="GO" id="GO:0022625">
    <property type="term" value="C:cytosolic large ribosomal subunit"/>
    <property type="evidence" value="ECO:0007669"/>
    <property type="project" value="TreeGrafter"/>
</dbReference>
<dbReference type="GO" id="GO:0003735">
    <property type="term" value="F:structural constituent of ribosome"/>
    <property type="evidence" value="ECO:0007669"/>
    <property type="project" value="InterPro"/>
</dbReference>
<dbReference type="GO" id="GO:0006412">
    <property type="term" value="P:translation"/>
    <property type="evidence" value="ECO:0007669"/>
    <property type="project" value="UniProtKB-UniRule"/>
</dbReference>
<dbReference type="Gene3D" id="2.30.170.40">
    <property type="entry name" value="Ribosomal protein L28/L24"/>
    <property type="match status" value="1"/>
</dbReference>
<dbReference type="HAMAP" id="MF_00373">
    <property type="entry name" value="Ribosomal_bL28"/>
    <property type="match status" value="1"/>
</dbReference>
<dbReference type="InterPro" id="IPR026569">
    <property type="entry name" value="Ribosomal_bL28"/>
</dbReference>
<dbReference type="InterPro" id="IPR034704">
    <property type="entry name" value="Ribosomal_bL28/bL31-like_sf"/>
</dbReference>
<dbReference type="InterPro" id="IPR001383">
    <property type="entry name" value="Ribosomal_bL28_bact-type"/>
</dbReference>
<dbReference type="InterPro" id="IPR037147">
    <property type="entry name" value="Ribosomal_bL28_sf"/>
</dbReference>
<dbReference type="NCBIfam" id="TIGR00009">
    <property type="entry name" value="L28"/>
    <property type="match status" value="1"/>
</dbReference>
<dbReference type="PANTHER" id="PTHR13528">
    <property type="entry name" value="39S RIBOSOMAL PROTEIN L28, MITOCHONDRIAL"/>
    <property type="match status" value="1"/>
</dbReference>
<dbReference type="PANTHER" id="PTHR13528:SF2">
    <property type="entry name" value="LARGE RIBOSOMAL SUBUNIT PROTEIN BL28M"/>
    <property type="match status" value="1"/>
</dbReference>
<dbReference type="Pfam" id="PF00830">
    <property type="entry name" value="Ribosomal_L28"/>
    <property type="match status" value="1"/>
</dbReference>
<dbReference type="SUPFAM" id="SSF143800">
    <property type="entry name" value="L28p-like"/>
    <property type="match status" value="1"/>
</dbReference>
<name>RL28_BARQU</name>